<comment type="function">
    <text evidence="1">RuBisCO catalyzes two reactions: the carboxylation of D-ribulose 1,5-bisphosphate, the primary event in carbon dioxide fixation, as well as the oxidative fragmentation of the pentose substrate in the photorespiration process. Both reactions occur simultaneously and in competition at the same active site.</text>
</comment>
<comment type="catalytic activity">
    <reaction evidence="1">
        <text>2 (2R)-3-phosphoglycerate + 2 H(+) = D-ribulose 1,5-bisphosphate + CO2 + H2O</text>
        <dbReference type="Rhea" id="RHEA:23124"/>
        <dbReference type="ChEBI" id="CHEBI:15377"/>
        <dbReference type="ChEBI" id="CHEBI:15378"/>
        <dbReference type="ChEBI" id="CHEBI:16526"/>
        <dbReference type="ChEBI" id="CHEBI:57870"/>
        <dbReference type="ChEBI" id="CHEBI:58272"/>
        <dbReference type="EC" id="4.1.1.39"/>
    </reaction>
</comment>
<comment type="catalytic activity">
    <reaction evidence="1">
        <text>D-ribulose 1,5-bisphosphate + O2 = 2-phosphoglycolate + (2R)-3-phosphoglycerate + 2 H(+)</text>
        <dbReference type="Rhea" id="RHEA:36631"/>
        <dbReference type="ChEBI" id="CHEBI:15378"/>
        <dbReference type="ChEBI" id="CHEBI:15379"/>
        <dbReference type="ChEBI" id="CHEBI:57870"/>
        <dbReference type="ChEBI" id="CHEBI:58033"/>
        <dbReference type="ChEBI" id="CHEBI:58272"/>
    </reaction>
</comment>
<comment type="cofactor">
    <cofactor evidence="1">
        <name>Mg(2+)</name>
        <dbReference type="ChEBI" id="CHEBI:18420"/>
    </cofactor>
    <text evidence="1">Binds 1 Mg(2+) ion per subunit.</text>
</comment>
<comment type="subunit">
    <text evidence="1">Heterohexadecamer of 8 large chains and 8 small chains; disulfide-linked. The disulfide link is formed within the large subunit homodimers.</text>
</comment>
<comment type="subcellular location">
    <subcellularLocation>
        <location>Plastid</location>
        <location>Chloroplast</location>
    </subcellularLocation>
</comment>
<comment type="PTM">
    <text evidence="1">The disulfide bond which can form in the large chain dimeric partners within the hexadecamer appears to be associated with oxidative stress and protein turnover.</text>
</comment>
<comment type="miscellaneous">
    <text evidence="1">The basic functional RuBisCO is composed of a large chain homodimer in a 'head-to-tail' conformation. In form I RuBisCO this homodimer is arranged in a barrel-like tetramer with the small subunits forming a tetrameric 'cap' on each end of the 'barrel'.</text>
</comment>
<comment type="similarity">
    <text evidence="1">Belongs to the RuBisCO large chain family. Type I subfamily.</text>
</comment>
<dbReference type="EC" id="4.1.1.39" evidence="1"/>
<dbReference type="EMBL" id="L01945">
    <property type="protein sequence ID" value="AAA84574.2"/>
    <property type="molecule type" value="Genomic_DNA"/>
</dbReference>
<dbReference type="SMR" id="P28443"/>
<dbReference type="GO" id="GO:0009507">
    <property type="term" value="C:chloroplast"/>
    <property type="evidence" value="ECO:0007669"/>
    <property type="project" value="UniProtKB-SubCell"/>
</dbReference>
<dbReference type="GO" id="GO:0000287">
    <property type="term" value="F:magnesium ion binding"/>
    <property type="evidence" value="ECO:0007669"/>
    <property type="project" value="InterPro"/>
</dbReference>
<dbReference type="GO" id="GO:0004497">
    <property type="term" value="F:monooxygenase activity"/>
    <property type="evidence" value="ECO:0007669"/>
    <property type="project" value="UniProtKB-KW"/>
</dbReference>
<dbReference type="GO" id="GO:0016984">
    <property type="term" value="F:ribulose-bisphosphate carboxylase activity"/>
    <property type="evidence" value="ECO:0007669"/>
    <property type="project" value="UniProtKB-EC"/>
</dbReference>
<dbReference type="GO" id="GO:0009853">
    <property type="term" value="P:photorespiration"/>
    <property type="evidence" value="ECO:0007669"/>
    <property type="project" value="UniProtKB-KW"/>
</dbReference>
<dbReference type="GO" id="GO:0019253">
    <property type="term" value="P:reductive pentose-phosphate cycle"/>
    <property type="evidence" value="ECO:0007669"/>
    <property type="project" value="UniProtKB-KW"/>
</dbReference>
<dbReference type="CDD" id="cd08212">
    <property type="entry name" value="RuBisCO_large_I"/>
    <property type="match status" value="1"/>
</dbReference>
<dbReference type="FunFam" id="3.20.20.110:FF:000001">
    <property type="entry name" value="Ribulose bisphosphate carboxylase large chain"/>
    <property type="match status" value="1"/>
</dbReference>
<dbReference type="FunFam" id="3.30.70.150:FF:000001">
    <property type="entry name" value="Ribulose bisphosphate carboxylase large chain"/>
    <property type="match status" value="1"/>
</dbReference>
<dbReference type="Gene3D" id="3.20.20.110">
    <property type="entry name" value="Ribulose bisphosphate carboxylase, large subunit, C-terminal domain"/>
    <property type="match status" value="1"/>
</dbReference>
<dbReference type="Gene3D" id="3.30.70.150">
    <property type="entry name" value="RuBisCO large subunit, N-terminal domain"/>
    <property type="match status" value="1"/>
</dbReference>
<dbReference type="HAMAP" id="MF_01338">
    <property type="entry name" value="RuBisCO_L_type1"/>
    <property type="match status" value="1"/>
</dbReference>
<dbReference type="InterPro" id="IPR033966">
    <property type="entry name" value="RuBisCO"/>
</dbReference>
<dbReference type="InterPro" id="IPR020878">
    <property type="entry name" value="RuBisCo_large_chain_AS"/>
</dbReference>
<dbReference type="InterPro" id="IPR000685">
    <property type="entry name" value="RuBisCO_lsu_C"/>
</dbReference>
<dbReference type="InterPro" id="IPR036376">
    <property type="entry name" value="RuBisCO_lsu_C_sf"/>
</dbReference>
<dbReference type="InterPro" id="IPR017443">
    <property type="entry name" value="RuBisCO_lsu_fd_N"/>
</dbReference>
<dbReference type="InterPro" id="IPR036422">
    <property type="entry name" value="RuBisCO_lsu_N_sf"/>
</dbReference>
<dbReference type="InterPro" id="IPR020888">
    <property type="entry name" value="RuBisCO_lsuI"/>
</dbReference>
<dbReference type="NCBIfam" id="NF003252">
    <property type="entry name" value="PRK04208.1"/>
    <property type="match status" value="1"/>
</dbReference>
<dbReference type="PANTHER" id="PTHR42704">
    <property type="entry name" value="RIBULOSE BISPHOSPHATE CARBOXYLASE"/>
    <property type="match status" value="1"/>
</dbReference>
<dbReference type="PANTHER" id="PTHR42704:SF16">
    <property type="entry name" value="RIBULOSE BISPHOSPHATE CARBOXYLASE LARGE CHAIN"/>
    <property type="match status" value="1"/>
</dbReference>
<dbReference type="Pfam" id="PF00016">
    <property type="entry name" value="RuBisCO_large"/>
    <property type="match status" value="1"/>
</dbReference>
<dbReference type="Pfam" id="PF02788">
    <property type="entry name" value="RuBisCO_large_N"/>
    <property type="match status" value="1"/>
</dbReference>
<dbReference type="SFLD" id="SFLDG01052">
    <property type="entry name" value="RuBisCO"/>
    <property type="match status" value="1"/>
</dbReference>
<dbReference type="SFLD" id="SFLDS00014">
    <property type="entry name" value="RuBisCO"/>
    <property type="match status" value="1"/>
</dbReference>
<dbReference type="SFLD" id="SFLDG00301">
    <property type="entry name" value="RuBisCO-like_proteins"/>
    <property type="match status" value="1"/>
</dbReference>
<dbReference type="SUPFAM" id="SSF51649">
    <property type="entry name" value="RuBisCo, C-terminal domain"/>
    <property type="match status" value="1"/>
</dbReference>
<dbReference type="SUPFAM" id="SSF54966">
    <property type="entry name" value="RuBisCO, large subunit, small (N-terminal) domain"/>
    <property type="match status" value="1"/>
</dbReference>
<dbReference type="PROSITE" id="PS00157">
    <property type="entry name" value="RUBISCO_LARGE"/>
    <property type="match status" value="1"/>
</dbReference>
<proteinExistence type="inferred from homology"/>
<evidence type="ECO:0000255" key="1">
    <source>
        <dbReference type="HAMAP-Rule" id="MF_01338"/>
    </source>
</evidence>
<reference key="1">
    <citation type="journal article" date="1992" name="Science">
        <title>Carnivorous plants: phylogeny and structural evolution.</title>
        <authorList>
            <person name="Albert V.A."/>
            <person name="Williams S.E."/>
            <person name="Chase M.W."/>
        </authorList>
    </citation>
    <scope>NUCLEOTIDE SEQUENCE [GENOMIC DNA]</scope>
</reference>
<keyword id="KW-0113">Calvin cycle</keyword>
<keyword id="KW-0120">Carbon dioxide fixation</keyword>
<keyword id="KW-0150">Chloroplast</keyword>
<keyword id="KW-1015">Disulfide bond</keyword>
<keyword id="KW-0456">Lyase</keyword>
<keyword id="KW-0460">Magnesium</keyword>
<keyword id="KW-0479">Metal-binding</keyword>
<keyword id="KW-0488">Methylation</keyword>
<keyword id="KW-0503">Monooxygenase</keyword>
<keyword id="KW-0560">Oxidoreductase</keyword>
<keyword id="KW-0601">Photorespiration</keyword>
<keyword id="KW-0602">Photosynthesis</keyword>
<keyword id="KW-0934">Plastid</keyword>
<sequence>VGFKAGVKDYKLTYYTPDYETKDTDILAAFRVTPQPGVPPEEAGAAVAAESSTGTWTTVWTDGLTSLDRYKGRCYHIESVAGEENQYIAYVAYPLDLFEEGSVTNMFTSIVGNVFGFKALRALRLEDLRIPPAYTKTFQGPPHGIQVERDKLNKYGRPLLGCTIKPKLGLSAKNYGRAVYECLRGGLDFTKDDENVNSQPFMRWRDRFLFCAEAIYKAQAETGEIKGHYLNATAGTCEEMIKRAVFARELGVPIVMHDYLTGGFTANTSLAHYCRDNGLLLHIHRAMHAVIDRQKNHGMHFRVLAKALRLSGGDHIHAGTVVGKLEGEREITLGFVVLLRDDFVEKDRSRGIYFTQDWVSIPGVLPVASGGIHVWHMPALTEIFGDDSVLQFGGGTLGHPWGNAPGAVANRVALEACVRARNEGRDLAREGNEIIREASKWSLELAAACEVWKEIKFDFEAMDTL</sequence>
<accession>P28443</accession>
<geneLocation type="chloroplast"/>
<organism>
    <name type="scientific">Senega cruciata</name>
    <name type="common">Cross-leaved milkwort</name>
    <name type="synonym">Polygala cruciata</name>
    <dbReference type="NCBI Taxonomy" id="4276"/>
    <lineage>
        <taxon>Eukaryota</taxon>
        <taxon>Viridiplantae</taxon>
        <taxon>Streptophyta</taxon>
        <taxon>Embryophyta</taxon>
        <taxon>Tracheophyta</taxon>
        <taxon>Spermatophyta</taxon>
        <taxon>Magnoliopsida</taxon>
        <taxon>eudicotyledons</taxon>
        <taxon>Gunneridae</taxon>
        <taxon>Pentapetalae</taxon>
        <taxon>rosids</taxon>
        <taxon>fabids</taxon>
        <taxon>Fabales</taxon>
        <taxon>Polygalaceae</taxon>
        <taxon>Senega</taxon>
        <taxon>Senega subgen. Senega</taxon>
    </lineage>
</organism>
<name>RBL_SENCR</name>
<protein>
    <recommendedName>
        <fullName evidence="1">Ribulose bisphosphate carboxylase large chain</fullName>
        <shortName evidence="1">RuBisCO large subunit</shortName>
        <ecNumber evidence="1">4.1.1.39</ecNumber>
    </recommendedName>
</protein>
<feature type="chain" id="PRO_0000062568" description="Ribulose bisphosphate carboxylase large chain">
    <location>
        <begin position="1" status="less than"/>
        <end position="465"/>
    </location>
</feature>
<feature type="active site" description="Proton acceptor" evidence="1">
    <location>
        <position position="165"/>
    </location>
</feature>
<feature type="active site" description="Proton acceptor" evidence="1">
    <location>
        <position position="284"/>
    </location>
</feature>
<feature type="binding site" description="in homodimeric partner" evidence="1">
    <location>
        <position position="113"/>
    </location>
    <ligand>
        <name>substrate</name>
    </ligand>
</feature>
<feature type="binding site" evidence="1">
    <location>
        <position position="163"/>
    </location>
    <ligand>
        <name>substrate</name>
    </ligand>
</feature>
<feature type="binding site" evidence="1">
    <location>
        <position position="167"/>
    </location>
    <ligand>
        <name>substrate</name>
    </ligand>
</feature>
<feature type="binding site" description="via carbamate group" evidence="1">
    <location>
        <position position="191"/>
    </location>
    <ligand>
        <name>Mg(2+)</name>
        <dbReference type="ChEBI" id="CHEBI:18420"/>
    </ligand>
</feature>
<feature type="binding site" evidence="1">
    <location>
        <position position="193"/>
    </location>
    <ligand>
        <name>Mg(2+)</name>
        <dbReference type="ChEBI" id="CHEBI:18420"/>
    </ligand>
</feature>
<feature type="binding site" evidence="1">
    <location>
        <position position="194"/>
    </location>
    <ligand>
        <name>Mg(2+)</name>
        <dbReference type="ChEBI" id="CHEBI:18420"/>
    </ligand>
</feature>
<feature type="binding site" evidence="1">
    <location>
        <position position="285"/>
    </location>
    <ligand>
        <name>substrate</name>
    </ligand>
</feature>
<feature type="binding site" evidence="1">
    <location>
        <position position="317"/>
    </location>
    <ligand>
        <name>substrate</name>
    </ligand>
</feature>
<feature type="binding site" evidence="1">
    <location>
        <position position="369"/>
    </location>
    <ligand>
        <name>substrate</name>
    </ligand>
</feature>
<feature type="site" description="Transition state stabilizer" evidence="1">
    <location>
        <position position="324"/>
    </location>
</feature>
<feature type="modified residue" description="N6,N6,N6-trimethyllysine" evidence="1">
    <location>
        <position position="4"/>
    </location>
</feature>
<feature type="modified residue" description="N6-carboxylysine" evidence="1">
    <location>
        <position position="191"/>
    </location>
</feature>
<feature type="disulfide bond" description="Interchain; in linked form" evidence="1">
    <location>
        <position position="237"/>
    </location>
</feature>
<feature type="non-terminal residue">
    <location>
        <position position="1"/>
    </location>
</feature>
<gene>
    <name evidence="1" type="primary">rbcL</name>
</gene>